<name>UNG_STRPF</name>
<keyword id="KW-0963">Cytoplasm</keyword>
<keyword id="KW-0227">DNA damage</keyword>
<keyword id="KW-0234">DNA repair</keyword>
<keyword id="KW-0378">Hydrolase</keyword>
<proteinExistence type="inferred from homology"/>
<organism>
    <name type="scientific">Streptococcus pyogenes serotype M4 (strain MGAS10750)</name>
    <dbReference type="NCBI Taxonomy" id="370554"/>
    <lineage>
        <taxon>Bacteria</taxon>
        <taxon>Bacillati</taxon>
        <taxon>Bacillota</taxon>
        <taxon>Bacilli</taxon>
        <taxon>Lactobacillales</taxon>
        <taxon>Streptococcaceae</taxon>
        <taxon>Streptococcus</taxon>
    </lineage>
</organism>
<dbReference type="EC" id="3.2.2.27" evidence="1"/>
<dbReference type="EMBL" id="CP000262">
    <property type="protein sequence ID" value="ABF37750.1"/>
    <property type="molecule type" value="Genomic_DNA"/>
</dbReference>
<dbReference type="SMR" id="Q1J724"/>
<dbReference type="KEGG" id="spi:MGAS10750_Spy0800"/>
<dbReference type="HOGENOM" id="CLU_032162_3_1_9"/>
<dbReference type="Proteomes" id="UP000002434">
    <property type="component" value="Chromosome"/>
</dbReference>
<dbReference type="GO" id="GO:0005737">
    <property type="term" value="C:cytoplasm"/>
    <property type="evidence" value="ECO:0007669"/>
    <property type="project" value="UniProtKB-SubCell"/>
</dbReference>
<dbReference type="GO" id="GO:0004844">
    <property type="term" value="F:uracil DNA N-glycosylase activity"/>
    <property type="evidence" value="ECO:0007669"/>
    <property type="project" value="UniProtKB-UniRule"/>
</dbReference>
<dbReference type="GO" id="GO:0097510">
    <property type="term" value="P:base-excision repair, AP site formation via deaminated base removal"/>
    <property type="evidence" value="ECO:0007669"/>
    <property type="project" value="TreeGrafter"/>
</dbReference>
<dbReference type="CDD" id="cd10027">
    <property type="entry name" value="UDG-F1-like"/>
    <property type="match status" value="1"/>
</dbReference>
<dbReference type="FunFam" id="3.40.470.10:FF:000008">
    <property type="entry name" value="Uracil-DNA glycosylase"/>
    <property type="match status" value="1"/>
</dbReference>
<dbReference type="Gene3D" id="3.40.470.10">
    <property type="entry name" value="Uracil-DNA glycosylase-like domain"/>
    <property type="match status" value="1"/>
</dbReference>
<dbReference type="HAMAP" id="MF_00148">
    <property type="entry name" value="UDG"/>
    <property type="match status" value="1"/>
</dbReference>
<dbReference type="InterPro" id="IPR002043">
    <property type="entry name" value="UDG_fam1"/>
</dbReference>
<dbReference type="InterPro" id="IPR018085">
    <property type="entry name" value="Ura-DNA_Glyclase_AS"/>
</dbReference>
<dbReference type="InterPro" id="IPR005122">
    <property type="entry name" value="Uracil-DNA_glycosylase-like"/>
</dbReference>
<dbReference type="InterPro" id="IPR036895">
    <property type="entry name" value="Uracil-DNA_glycosylase-like_sf"/>
</dbReference>
<dbReference type="NCBIfam" id="NF003588">
    <property type="entry name" value="PRK05254.1-1"/>
    <property type="match status" value="1"/>
</dbReference>
<dbReference type="NCBIfam" id="NF003589">
    <property type="entry name" value="PRK05254.1-2"/>
    <property type="match status" value="1"/>
</dbReference>
<dbReference type="NCBIfam" id="NF003592">
    <property type="entry name" value="PRK05254.1-5"/>
    <property type="match status" value="1"/>
</dbReference>
<dbReference type="NCBIfam" id="TIGR00628">
    <property type="entry name" value="ung"/>
    <property type="match status" value="1"/>
</dbReference>
<dbReference type="PANTHER" id="PTHR11264">
    <property type="entry name" value="URACIL-DNA GLYCOSYLASE"/>
    <property type="match status" value="1"/>
</dbReference>
<dbReference type="PANTHER" id="PTHR11264:SF0">
    <property type="entry name" value="URACIL-DNA GLYCOSYLASE"/>
    <property type="match status" value="1"/>
</dbReference>
<dbReference type="Pfam" id="PF03167">
    <property type="entry name" value="UDG"/>
    <property type="match status" value="1"/>
</dbReference>
<dbReference type="SMART" id="SM00986">
    <property type="entry name" value="UDG"/>
    <property type="match status" value="1"/>
</dbReference>
<dbReference type="SMART" id="SM00987">
    <property type="entry name" value="UreE_C"/>
    <property type="match status" value="1"/>
</dbReference>
<dbReference type="SUPFAM" id="SSF52141">
    <property type="entry name" value="Uracil-DNA glycosylase-like"/>
    <property type="match status" value="1"/>
</dbReference>
<dbReference type="PROSITE" id="PS00130">
    <property type="entry name" value="U_DNA_GLYCOSYLASE"/>
    <property type="match status" value="1"/>
</dbReference>
<sequence length="217" mass="24264">MTHSIWHEKIKSFLPEHYYGRINHFLDEAYASGLVYPQRENVFKALQVTPLEETKVLILGQDPYHGPKQAQGLSFSVPEEISAPPSLINILKELADDIGPRDHHDLSTWASQGVLLLNACLTVPAGQANGHAGLIWEPFTDAVIKVLNEKDSPVVFILWGAYARKKKAFITNSKHHIIESPHPSPLSSYRGFFGSKPFSRTNAILEKEGMTGVDWLK</sequence>
<gene>
    <name evidence="1" type="primary">ung</name>
    <name type="ordered locus">MGAS10750_Spy0800</name>
</gene>
<accession>Q1J724</accession>
<evidence type="ECO:0000255" key="1">
    <source>
        <dbReference type="HAMAP-Rule" id="MF_00148"/>
    </source>
</evidence>
<comment type="function">
    <text evidence="1">Excises uracil residues from the DNA which can arise as a result of misincorporation of dUMP residues by DNA polymerase or due to deamination of cytosine.</text>
</comment>
<comment type="catalytic activity">
    <reaction evidence="1">
        <text>Hydrolyzes single-stranded DNA or mismatched double-stranded DNA and polynucleotides, releasing free uracil.</text>
        <dbReference type="EC" id="3.2.2.27"/>
    </reaction>
</comment>
<comment type="subcellular location">
    <subcellularLocation>
        <location evidence="1">Cytoplasm</location>
    </subcellularLocation>
</comment>
<comment type="similarity">
    <text evidence="1">Belongs to the uracil-DNA glycosylase (UDG) superfamily. UNG family.</text>
</comment>
<protein>
    <recommendedName>
        <fullName evidence="1">Uracil-DNA glycosylase</fullName>
        <shortName evidence="1">UDG</shortName>
        <ecNumber evidence="1">3.2.2.27</ecNumber>
    </recommendedName>
</protein>
<feature type="chain" id="PRO_1000009953" description="Uracil-DNA glycosylase">
    <location>
        <begin position="1"/>
        <end position="217"/>
    </location>
</feature>
<feature type="active site" description="Proton acceptor" evidence="1">
    <location>
        <position position="62"/>
    </location>
</feature>
<reference key="1">
    <citation type="journal article" date="2006" name="Proc. Natl. Acad. Sci. U.S.A.">
        <title>Molecular genetic anatomy of inter- and intraserotype variation in the human bacterial pathogen group A Streptococcus.</title>
        <authorList>
            <person name="Beres S.B."/>
            <person name="Richter E.W."/>
            <person name="Nagiec M.J."/>
            <person name="Sumby P."/>
            <person name="Porcella S.F."/>
            <person name="DeLeo F.R."/>
            <person name="Musser J.M."/>
        </authorList>
    </citation>
    <scope>NUCLEOTIDE SEQUENCE [LARGE SCALE GENOMIC DNA]</scope>
    <source>
        <strain>MGAS10750</strain>
    </source>
</reference>